<keyword id="KW-0456">Lyase</keyword>
<keyword id="KW-0474">Menaquinone biosynthesis</keyword>
<dbReference type="EC" id="4.2.99.20" evidence="1"/>
<dbReference type="EMBL" id="CP000826">
    <property type="protein sequence ID" value="ABV42380.1"/>
    <property type="molecule type" value="Genomic_DNA"/>
</dbReference>
<dbReference type="SMR" id="A8GGZ0"/>
<dbReference type="STRING" id="399741.Spro_3282"/>
<dbReference type="ESTHER" id="serp5-menh">
    <property type="family name" value="MenH_SHCHC"/>
</dbReference>
<dbReference type="KEGG" id="spe:Spro_3282"/>
<dbReference type="eggNOG" id="COG0596">
    <property type="taxonomic scope" value="Bacteria"/>
</dbReference>
<dbReference type="HOGENOM" id="CLU_020336_38_2_6"/>
<dbReference type="UniPathway" id="UPA00079"/>
<dbReference type="UniPathway" id="UPA01057">
    <property type="reaction ID" value="UER00900"/>
</dbReference>
<dbReference type="GO" id="GO:0070205">
    <property type="term" value="F:2-succinyl-6-hydroxy-2,4-cyclohexadiene-1-carboxylate synthase activity"/>
    <property type="evidence" value="ECO:0007669"/>
    <property type="project" value="UniProtKB-UniRule"/>
</dbReference>
<dbReference type="GO" id="GO:0009234">
    <property type="term" value="P:menaquinone biosynthetic process"/>
    <property type="evidence" value="ECO:0007669"/>
    <property type="project" value="UniProtKB-UniRule"/>
</dbReference>
<dbReference type="Gene3D" id="3.40.50.1820">
    <property type="entry name" value="alpha/beta hydrolase"/>
    <property type="match status" value="1"/>
</dbReference>
<dbReference type="HAMAP" id="MF_01660">
    <property type="entry name" value="MenH"/>
    <property type="match status" value="1"/>
</dbReference>
<dbReference type="InterPro" id="IPR000073">
    <property type="entry name" value="AB_hydrolase_1"/>
</dbReference>
<dbReference type="InterPro" id="IPR029058">
    <property type="entry name" value="AB_hydrolase_fold"/>
</dbReference>
<dbReference type="InterPro" id="IPR022485">
    <property type="entry name" value="SHCHC_synthase_MenH"/>
</dbReference>
<dbReference type="NCBIfam" id="TIGR03695">
    <property type="entry name" value="menH_SHCHC"/>
    <property type="match status" value="1"/>
</dbReference>
<dbReference type="NCBIfam" id="NF008340">
    <property type="entry name" value="PRK11126.1"/>
    <property type="match status" value="1"/>
</dbReference>
<dbReference type="PANTHER" id="PTHR42916">
    <property type="entry name" value="2-SUCCINYL-5-ENOLPYRUVYL-6-HYDROXY-3-CYCLOHEXENE-1-CARBOXYLATE SYNTHASE"/>
    <property type="match status" value="1"/>
</dbReference>
<dbReference type="PANTHER" id="PTHR42916:SF1">
    <property type="entry name" value="PROTEIN PHYLLO, CHLOROPLASTIC"/>
    <property type="match status" value="1"/>
</dbReference>
<dbReference type="Pfam" id="PF00561">
    <property type="entry name" value="Abhydrolase_1"/>
    <property type="match status" value="1"/>
</dbReference>
<dbReference type="SUPFAM" id="SSF53474">
    <property type="entry name" value="alpha/beta-Hydrolases"/>
    <property type="match status" value="1"/>
</dbReference>
<feature type="chain" id="PRO_0000341923" description="2-succinyl-6-hydroxy-2,4-cyclohexadiene-1-carboxylate synthase">
    <location>
        <begin position="1"/>
        <end position="255"/>
    </location>
</feature>
<evidence type="ECO:0000255" key="1">
    <source>
        <dbReference type="HAMAP-Rule" id="MF_01660"/>
    </source>
</evidence>
<reference key="1">
    <citation type="submission" date="2007-09" db="EMBL/GenBank/DDBJ databases">
        <title>Complete sequence of chromosome of Serratia proteamaculans 568.</title>
        <authorList>
            <consortium name="US DOE Joint Genome Institute"/>
            <person name="Copeland A."/>
            <person name="Lucas S."/>
            <person name="Lapidus A."/>
            <person name="Barry K."/>
            <person name="Glavina del Rio T."/>
            <person name="Dalin E."/>
            <person name="Tice H."/>
            <person name="Pitluck S."/>
            <person name="Chain P."/>
            <person name="Malfatti S."/>
            <person name="Shin M."/>
            <person name="Vergez L."/>
            <person name="Schmutz J."/>
            <person name="Larimer F."/>
            <person name="Land M."/>
            <person name="Hauser L."/>
            <person name="Kyrpides N."/>
            <person name="Kim E."/>
            <person name="Taghavi S."/>
            <person name="Newman L."/>
            <person name="Vangronsveld J."/>
            <person name="van der Lelie D."/>
            <person name="Richardson P."/>
        </authorList>
    </citation>
    <scope>NUCLEOTIDE SEQUENCE [LARGE SCALE GENOMIC DNA]</scope>
    <source>
        <strain>568</strain>
    </source>
</reference>
<sequence>MLATKVLQQGEADRPWLIWLHGLLGNNNEWRVIASRCPEWPSLAIDLPGHGDSVAVVCTSFDDISAQISATLQMHGIERYWLVGYSLGGRIAMYHACHGEPRGLQGVIIEGGNPGLADAAQRELRLAHDTAWAERFRREPLAQVLADWYQQPVFANLSAVHRDALIDARSDNAGAAVADMLEATSLGTQPCLAPQLQQLAVPLVVLCGADDHKFQQLTRDAGLPLRIVPQAGHNSHLANPQAFAAELRNFLVNPG</sequence>
<accession>A8GGZ0</accession>
<gene>
    <name evidence="1" type="primary">menH</name>
    <name type="ordered locus">Spro_3282</name>
</gene>
<organism>
    <name type="scientific">Serratia proteamaculans (strain 568)</name>
    <dbReference type="NCBI Taxonomy" id="399741"/>
    <lineage>
        <taxon>Bacteria</taxon>
        <taxon>Pseudomonadati</taxon>
        <taxon>Pseudomonadota</taxon>
        <taxon>Gammaproteobacteria</taxon>
        <taxon>Enterobacterales</taxon>
        <taxon>Yersiniaceae</taxon>
        <taxon>Serratia</taxon>
    </lineage>
</organism>
<protein>
    <recommendedName>
        <fullName evidence="1">2-succinyl-6-hydroxy-2,4-cyclohexadiene-1-carboxylate synthase</fullName>
        <shortName evidence="1">SHCHC synthase</shortName>
        <ecNumber evidence="1">4.2.99.20</ecNumber>
    </recommendedName>
</protein>
<name>MENH_SERP5</name>
<proteinExistence type="inferred from homology"/>
<comment type="function">
    <text evidence="1">Catalyzes a proton abstraction reaction that results in 2,5-elimination of pyruvate from 2-succinyl-5-enolpyruvyl-6-hydroxy-3-cyclohexene-1-carboxylate (SEPHCHC) and the formation of 2-succinyl-6-hydroxy-2,4-cyclohexadiene-1-carboxylate (SHCHC).</text>
</comment>
<comment type="catalytic activity">
    <reaction evidence="1">
        <text>5-enolpyruvoyl-6-hydroxy-2-succinyl-cyclohex-3-ene-1-carboxylate = (1R,6R)-6-hydroxy-2-succinyl-cyclohexa-2,4-diene-1-carboxylate + pyruvate</text>
        <dbReference type="Rhea" id="RHEA:25597"/>
        <dbReference type="ChEBI" id="CHEBI:15361"/>
        <dbReference type="ChEBI" id="CHEBI:58689"/>
        <dbReference type="ChEBI" id="CHEBI:58818"/>
        <dbReference type="EC" id="4.2.99.20"/>
    </reaction>
</comment>
<comment type="pathway">
    <text evidence="1">Quinol/quinone metabolism; 1,4-dihydroxy-2-naphthoate biosynthesis; 1,4-dihydroxy-2-naphthoate from chorismate: step 3/7.</text>
</comment>
<comment type="pathway">
    <text evidence="1">Quinol/quinone metabolism; menaquinone biosynthesis.</text>
</comment>
<comment type="subunit">
    <text evidence="1">Monomer.</text>
</comment>
<comment type="similarity">
    <text evidence="1">Belongs to the AB hydrolase superfamily. MenH family.</text>
</comment>